<gene>
    <name type="primary">aquIMB</name>
    <name type="ordered locus">SYNPCC7002_A1188.1</name>
</gene>
<name>MTAB_PICP2</name>
<protein>
    <recommendedName>
        <fullName evidence="4">Type II methyltransferase M.AquIB</fullName>
        <shortName evidence="4">M.AquiB</shortName>
        <ecNumber>2.1.1.37</ecNumber>
    </recommendedName>
    <alternativeName>
        <fullName>Cytosine-specific methyltransferase AquI subunit beta</fullName>
    </alternativeName>
    <alternativeName>
        <fullName evidence="5">Modification methylase AquI subunit beta</fullName>
        <shortName evidence="5">M.AquI subunit beta</shortName>
    </alternativeName>
</protein>
<dbReference type="EC" id="2.1.1.37"/>
<dbReference type="EMBL" id="M28051">
    <property type="protein sequence ID" value="AAA22068.1"/>
    <property type="molecule type" value="Genomic_DNA"/>
</dbReference>
<dbReference type="EMBL" id="CP000951">
    <property type="status" value="NOT_ANNOTATED_CDS"/>
    <property type="molecule type" value="Genomic_DNA"/>
</dbReference>
<dbReference type="RefSeq" id="WP_012308460.1">
    <property type="nucleotide sequence ID" value="NZ_JAHHPU010000001.1"/>
</dbReference>
<dbReference type="SMR" id="P34883"/>
<dbReference type="REBASE" id="3283">
    <property type="entry name" value="M.AquI"/>
</dbReference>
<dbReference type="PRO" id="PR:P34883"/>
<dbReference type="Proteomes" id="UP000001688">
    <property type="component" value="Chromosome"/>
</dbReference>
<dbReference type="GO" id="GO:0003886">
    <property type="term" value="F:DNA (cytosine-5-)-methyltransferase activity"/>
    <property type="evidence" value="ECO:0007669"/>
    <property type="project" value="UniProtKB-EC"/>
</dbReference>
<dbReference type="GO" id="GO:0003677">
    <property type="term" value="F:DNA binding"/>
    <property type="evidence" value="ECO:0007669"/>
    <property type="project" value="UniProtKB-KW"/>
</dbReference>
<dbReference type="GO" id="GO:0009307">
    <property type="term" value="P:DNA restriction-modification system"/>
    <property type="evidence" value="ECO:0007669"/>
    <property type="project" value="UniProtKB-KW"/>
</dbReference>
<dbReference type="GO" id="GO:0032259">
    <property type="term" value="P:methylation"/>
    <property type="evidence" value="ECO:0007669"/>
    <property type="project" value="UniProtKB-KW"/>
</dbReference>
<dbReference type="GO" id="GO:0044027">
    <property type="term" value="P:negative regulation of gene expression via chromosomal CpG island methylation"/>
    <property type="evidence" value="ECO:0007669"/>
    <property type="project" value="TreeGrafter"/>
</dbReference>
<dbReference type="Gene3D" id="3.90.120.10">
    <property type="entry name" value="DNA Methylase, subunit A, domain 2"/>
    <property type="match status" value="1"/>
</dbReference>
<dbReference type="InterPro" id="IPR050390">
    <property type="entry name" value="C5-Methyltransferase"/>
</dbReference>
<dbReference type="InterPro" id="IPR001525">
    <property type="entry name" value="C5_MeTfrase"/>
</dbReference>
<dbReference type="InterPro" id="IPR031303">
    <property type="entry name" value="C5_meth_CS"/>
</dbReference>
<dbReference type="InterPro" id="IPR029063">
    <property type="entry name" value="SAM-dependent_MTases_sf"/>
</dbReference>
<dbReference type="PANTHER" id="PTHR10629">
    <property type="entry name" value="CYTOSINE-SPECIFIC METHYLTRANSFERASE"/>
    <property type="match status" value="1"/>
</dbReference>
<dbReference type="PANTHER" id="PTHR10629:SF52">
    <property type="entry name" value="DNA (CYTOSINE-5)-METHYLTRANSFERASE 1"/>
    <property type="match status" value="1"/>
</dbReference>
<dbReference type="Pfam" id="PF00145">
    <property type="entry name" value="DNA_methylase"/>
    <property type="match status" value="1"/>
</dbReference>
<dbReference type="SUPFAM" id="SSF53335">
    <property type="entry name" value="S-adenosyl-L-methionine-dependent methyltransferases"/>
    <property type="match status" value="1"/>
</dbReference>
<dbReference type="PROSITE" id="PS00095">
    <property type="entry name" value="C5_MTASE_2"/>
    <property type="match status" value="1"/>
</dbReference>
<dbReference type="PROSITE" id="PS51679">
    <property type="entry name" value="SAM_MT_C5"/>
    <property type="match status" value="1"/>
</dbReference>
<evidence type="ECO:0000255" key="1">
    <source>
        <dbReference type="PROSITE-ProRule" id="PRU01016"/>
    </source>
</evidence>
<evidence type="ECO:0000256" key="2">
    <source>
        <dbReference type="SAM" id="MobiDB-lite"/>
    </source>
</evidence>
<evidence type="ECO:0000269" key="3">
    <source>
    </source>
</evidence>
<evidence type="ECO:0000303" key="4">
    <source>
    </source>
</evidence>
<evidence type="ECO:0000303" key="5">
    <source>
    </source>
</evidence>
<evidence type="ECO:0000305" key="6">
    <source>
    </source>
</evidence>
<feature type="chain" id="PRO_0000087855" description="Type II methyltransferase M.AquIB">
    <location>
        <begin position="1"/>
        <end position="139"/>
    </location>
</feature>
<feature type="domain" description="SAM-dependent MTase C5-type" evidence="1">
    <location>
        <begin position="1"/>
        <end position="135"/>
    </location>
</feature>
<feature type="region of interest" description="Disordered" evidence="2">
    <location>
        <begin position="38"/>
        <end position="58"/>
    </location>
</feature>
<keyword id="KW-0238">DNA-binding</keyword>
<keyword id="KW-0489">Methyltransferase</keyword>
<keyword id="KW-1185">Reference proteome</keyword>
<keyword id="KW-0680">Restriction system</keyword>
<keyword id="KW-0949">S-adenosyl-L-methionine</keyword>
<keyword id="KW-0808">Transferase</keyword>
<accession>P34883</accession>
<proteinExistence type="evidence at protein level"/>
<reference key="1">
    <citation type="journal article" date="1990" name="J. Bacteriol.">
        <title>Agmenellum quadruplicatum M.AquI, a novel modification methylase.</title>
        <authorList>
            <person name="Karreman C."/>
            <person name="de Waard A."/>
        </authorList>
    </citation>
    <scope>NUCLEOTIDE SEQUENCE [GENOMIC DNA]</scope>
    <scope>FUNCTION</scope>
    <scope>PROBABLE SUBUNIT</scope>
    <source>
        <strain>ATCC 27264 / PCC 7002 / PR-6</strain>
    </source>
</reference>
<reference key="2">
    <citation type="submission" date="2008-02" db="EMBL/GenBank/DDBJ databases">
        <title>Complete sequence of Synechococcus sp. PCC 7002.</title>
        <authorList>
            <person name="Li T."/>
            <person name="Zhao J."/>
            <person name="Zhao C."/>
            <person name="Liu Z."/>
            <person name="Zhao F."/>
            <person name="Marquardt J."/>
            <person name="Nomura C.T."/>
            <person name="Persson S."/>
            <person name="Detter J.C."/>
            <person name="Richardson P.M."/>
            <person name="Lanz C."/>
            <person name="Schuster S.C."/>
            <person name="Wang J."/>
            <person name="Li S."/>
            <person name="Huang X."/>
            <person name="Cai T."/>
            <person name="Yu Z."/>
            <person name="Luo J."/>
            <person name="Zhao J."/>
            <person name="Bryant D.A."/>
        </authorList>
    </citation>
    <scope>NUCLEOTIDE SEQUENCE [LARGE SCALE GENOMIC DNA]</scope>
    <source>
        <strain>ATCC 27264 / PCC 7002 / PR-6</strain>
    </source>
</reference>
<reference key="3">
    <citation type="journal article" date="2003" name="Nucleic Acids Res.">
        <title>A nomenclature for restriction enzymes, DNA methyltransferases, homing endonucleases and their genes.</title>
        <authorList>
            <person name="Roberts R.J."/>
            <person name="Belfort M."/>
            <person name="Bestor T."/>
            <person name="Bhagwat A.S."/>
            <person name="Bickle T.A."/>
            <person name="Bitinaite J."/>
            <person name="Blumenthal R.M."/>
            <person name="Degtyarev S.K."/>
            <person name="Dryden D.T."/>
            <person name="Dybvig K."/>
            <person name="Firman K."/>
            <person name="Gromova E.S."/>
            <person name="Gumport R.I."/>
            <person name="Halford S.E."/>
            <person name="Hattman S."/>
            <person name="Heitman J."/>
            <person name="Hornby D.P."/>
            <person name="Janulaitis A."/>
            <person name="Jeltsch A."/>
            <person name="Josephsen J."/>
            <person name="Kiss A."/>
            <person name="Klaenhammer T.R."/>
            <person name="Kobayashi I."/>
            <person name="Kong H."/>
            <person name="Krueger D.H."/>
            <person name="Lacks S."/>
            <person name="Marinus M.G."/>
            <person name="Miyahara M."/>
            <person name="Morgan R.D."/>
            <person name="Murray N.E."/>
            <person name="Nagaraja V."/>
            <person name="Piekarowicz A."/>
            <person name="Pingoud A."/>
            <person name="Raleigh E."/>
            <person name="Rao D.N."/>
            <person name="Reich N."/>
            <person name="Repin V.E."/>
            <person name="Selker E.U."/>
            <person name="Shaw P.C."/>
            <person name="Stein D.C."/>
            <person name="Stoddard B.L."/>
            <person name="Szybalski W."/>
            <person name="Trautner T.A."/>
            <person name="Van Etten J.L."/>
            <person name="Vitor J.M."/>
            <person name="Wilson G.G."/>
            <person name="Xu S.Y."/>
        </authorList>
    </citation>
    <scope>NOMENCLATURE</scope>
</reference>
<sequence>MDIKNVHIKNHEQTAHAPSTLEKIRKVKQGGKLSEQTKTFGSTYRRLDPNQPSPTVTRSGYRDFIHPFEDRMLTVRELACLQTFPLDWEFTGTRLDSYSSKRKVTMTQFGQVGNAVPPLLAEAVAKAVSEQLLDVIDEK</sequence>
<comment type="function">
    <text evidence="3 4">A methylase, recognizes the double-stranded sequence 5'-CYCGRG-3', methylates C-1 on both strands, and protects the DNA from cleavage by the AquI endonuclease.</text>
</comment>
<comment type="catalytic activity">
    <reaction>
        <text>a 2'-deoxycytidine in DNA + S-adenosyl-L-methionine = a 5-methyl-2'-deoxycytidine in DNA + S-adenosyl-L-homocysteine + H(+)</text>
        <dbReference type="Rhea" id="RHEA:13681"/>
        <dbReference type="Rhea" id="RHEA-COMP:11369"/>
        <dbReference type="Rhea" id="RHEA-COMP:11370"/>
        <dbReference type="ChEBI" id="CHEBI:15378"/>
        <dbReference type="ChEBI" id="CHEBI:57856"/>
        <dbReference type="ChEBI" id="CHEBI:59789"/>
        <dbReference type="ChEBI" id="CHEBI:85452"/>
        <dbReference type="ChEBI" id="CHEBI:85454"/>
        <dbReference type="EC" id="2.1.1.37"/>
    </reaction>
</comment>
<comment type="subunit">
    <text evidence="6">Heterodimer of an alpha and a beta subunit.</text>
</comment>
<comment type="domain">
    <text evidence="6">Corresponds to the C-terminal half of the enzymatic domain.</text>
</comment>
<comment type="similarity">
    <text evidence="1">Belongs to the class I-like SAM-binding methyltransferase superfamily. C5-methyltransferase family.</text>
</comment>
<organism>
    <name type="scientific">Picosynechococcus sp. (strain ATCC 27264 / PCC 7002 / PR-6)</name>
    <name type="common">Agmenellum quadruplicatum</name>
    <dbReference type="NCBI Taxonomy" id="32049"/>
    <lineage>
        <taxon>Bacteria</taxon>
        <taxon>Bacillati</taxon>
        <taxon>Cyanobacteriota</taxon>
        <taxon>Cyanophyceae</taxon>
        <taxon>Oscillatoriophycideae</taxon>
        <taxon>Chroococcales</taxon>
        <taxon>Geminocystaceae</taxon>
        <taxon>Picosynechococcus</taxon>
    </lineage>
</organism>